<accession>Q81ST1</accession>
<accession>Q6I111</accession>
<accession>Q6KUW5</accession>
<keyword id="KW-0068">Autocatalytic cleavage</keyword>
<keyword id="KW-0963">Cytoplasm</keyword>
<keyword id="KW-0210">Decarboxylase</keyword>
<keyword id="KW-0456">Lyase</keyword>
<keyword id="KW-0566">Pantothenate biosynthesis</keyword>
<keyword id="KW-0670">Pyruvate</keyword>
<keyword id="KW-1185">Reference proteome</keyword>
<keyword id="KW-0704">Schiff base</keyword>
<keyword id="KW-0865">Zymogen</keyword>
<gene>
    <name evidence="1" type="primary">panD</name>
    <name type="ordered locus">BA_1564</name>
    <name type="ordered locus">GBAA_1564</name>
    <name type="ordered locus">BAS1451</name>
</gene>
<proteinExistence type="inferred from homology"/>
<sequence length="127" mass="13909">MFRTMMRAKLHRATVTEANLNYVGSITIDEDLMDAVNIVENEKVQIVNNNNGARLETYVIKGERGSGVVCLNGAAARLVQPGDKVIIICYGLVAEENIHKQEPKIAVLDDDNQIIEMLGAEKAGTIL</sequence>
<organism>
    <name type="scientific">Bacillus anthracis</name>
    <dbReference type="NCBI Taxonomy" id="1392"/>
    <lineage>
        <taxon>Bacteria</taxon>
        <taxon>Bacillati</taxon>
        <taxon>Bacillota</taxon>
        <taxon>Bacilli</taxon>
        <taxon>Bacillales</taxon>
        <taxon>Bacillaceae</taxon>
        <taxon>Bacillus</taxon>
        <taxon>Bacillus cereus group</taxon>
    </lineage>
</organism>
<feature type="chain" id="PRO_0000023017" description="Aspartate 1-decarboxylase beta chain" evidence="1">
    <location>
        <begin position="1"/>
        <end position="24"/>
    </location>
</feature>
<feature type="chain" id="PRO_0000023018" description="Aspartate 1-decarboxylase alpha chain" evidence="1">
    <location>
        <begin position="25"/>
        <end position="127"/>
    </location>
</feature>
<feature type="active site" description="Schiff-base intermediate with substrate; via pyruvic acid" evidence="1">
    <location>
        <position position="25"/>
    </location>
</feature>
<feature type="active site" description="Proton donor" evidence="1">
    <location>
        <position position="58"/>
    </location>
</feature>
<feature type="binding site" evidence="1">
    <location>
        <position position="57"/>
    </location>
    <ligand>
        <name>substrate</name>
    </ligand>
</feature>
<feature type="binding site" evidence="1">
    <location>
        <begin position="73"/>
        <end position="75"/>
    </location>
    <ligand>
        <name>substrate</name>
    </ligand>
</feature>
<feature type="modified residue" description="Pyruvic acid (Ser)" evidence="1">
    <location>
        <position position="25"/>
    </location>
</feature>
<protein>
    <recommendedName>
        <fullName evidence="1">Aspartate 1-decarboxylase</fullName>
        <ecNumber evidence="1">4.1.1.11</ecNumber>
    </recommendedName>
    <alternativeName>
        <fullName evidence="1">Aspartate alpha-decarboxylase</fullName>
    </alternativeName>
    <component>
        <recommendedName>
            <fullName evidence="1">Aspartate 1-decarboxylase beta chain</fullName>
        </recommendedName>
    </component>
    <component>
        <recommendedName>
            <fullName evidence="1">Aspartate 1-decarboxylase alpha chain</fullName>
        </recommendedName>
    </component>
</protein>
<evidence type="ECO:0000255" key="1">
    <source>
        <dbReference type="HAMAP-Rule" id="MF_00446"/>
    </source>
</evidence>
<dbReference type="EC" id="4.1.1.11" evidence="1"/>
<dbReference type="EMBL" id="AE016879">
    <property type="protein sequence ID" value="AAP25500.1"/>
    <property type="molecule type" value="Genomic_DNA"/>
</dbReference>
<dbReference type="EMBL" id="AE017334">
    <property type="protein sequence ID" value="AAT30661.1"/>
    <property type="molecule type" value="Genomic_DNA"/>
</dbReference>
<dbReference type="EMBL" id="AE017225">
    <property type="protein sequence ID" value="AAT53771.1"/>
    <property type="molecule type" value="Genomic_DNA"/>
</dbReference>
<dbReference type="RefSeq" id="NP_844014.1">
    <property type="nucleotide sequence ID" value="NC_003997.3"/>
</dbReference>
<dbReference type="RefSeq" id="WP_000490176.1">
    <property type="nucleotide sequence ID" value="NZ_WXXJ01000001.1"/>
</dbReference>
<dbReference type="RefSeq" id="YP_027720.1">
    <property type="nucleotide sequence ID" value="NC_005945.1"/>
</dbReference>
<dbReference type="SMR" id="Q81ST1"/>
<dbReference type="STRING" id="261594.GBAA_1564"/>
<dbReference type="DNASU" id="1086955"/>
<dbReference type="GeneID" id="75084853"/>
<dbReference type="KEGG" id="ban:BA_1564"/>
<dbReference type="KEGG" id="bar:GBAA_1564"/>
<dbReference type="KEGG" id="bat:BAS1451"/>
<dbReference type="PATRIC" id="fig|198094.11.peg.1534"/>
<dbReference type="eggNOG" id="COG0853">
    <property type="taxonomic scope" value="Bacteria"/>
</dbReference>
<dbReference type="HOGENOM" id="CLU_115305_2_0_9"/>
<dbReference type="OMA" id="MLYSKIH"/>
<dbReference type="OrthoDB" id="9803983at2"/>
<dbReference type="UniPathway" id="UPA00028">
    <property type="reaction ID" value="UER00002"/>
</dbReference>
<dbReference type="Proteomes" id="UP000000427">
    <property type="component" value="Chromosome"/>
</dbReference>
<dbReference type="Proteomes" id="UP000000594">
    <property type="component" value="Chromosome"/>
</dbReference>
<dbReference type="GO" id="GO:0005829">
    <property type="term" value="C:cytosol"/>
    <property type="evidence" value="ECO:0007669"/>
    <property type="project" value="TreeGrafter"/>
</dbReference>
<dbReference type="GO" id="GO:0004068">
    <property type="term" value="F:aspartate 1-decarboxylase activity"/>
    <property type="evidence" value="ECO:0007669"/>
    <property type="project" value="UniProtKB-UniRule"/>
</dbReference>
<dbReference type="GO" id="GO:0006523">
    <property type="term" value="P:alanine biosynthetic process"/>
    <property type="evidence" value="ECO:0007669"/>
    <property type="project" value="InterPro"/>
</dbReference>
<dbReference type="GO" id="GO:0015940">
    <property type="term" value="P:pantothenate biosynthetic process"/>
    <property type="evidence" value="ECO:0007669"/>
    <property type="project" value="UniProtKB-UniRule"/>
</dbReference>
<dbReference type="CDD" id="cd06919">
    <property type="entry name" value="Asp_decarbox"/>
    <property type="match status" value="1"/>
</dbReference>
<dbReference type="Gene3D" id="2.40.40.20">
    <property type="match status" value="1"/>
</dbReference>
<dbReference type="HAMAP" id="MF_00446">
    <property type="entry name" value="PanD"/>
    <property type="match status" value="1"/>
</dbReference>
<dbReference type="InterPro" id="IPR009010">
    <property type="entry name" value="Asp_de-COase-like_dom_sf"/>
</dbReference>
<dbReference type="InterPro" id="IPR003190">
    <property type="entry name" value="Asp_decarbox"/>
</dbReference>
<dbReference type="NCBIfam" id="TIGR00223">
    <property type="entry name" value="panD"/>
    <property type="match status" value="1"/>
</dbReference>
<dbReference type="PANTHER" id="PTHR21012">
    <property type="entry name" value="ASPARTATE 1-DECARBOXYLASE"/>
    <property type="match status" value="1"/>
</dbReference>
<dbReference type="PANTHER" id="PTHR21012:SF0">
    <property type="entry name" value="ASPARTATE 1-DECARBOXYLASE"/>
    <property type="match status" value="1"/>
</dbReference>
<dbReference type="Pfam" id="PF02261">
    <property type="entry name" value="Asp_decarbox"/>
    <property type="match status" value="1"/>
</dbReference>
<dbReference type="PIRSF" id="PIRSF006246">
    <property type="entry name" value="Asp_decarbox"/>
    <property type="match status" value="1"/>
</dbReference>
<dbReference type="SUPFAM" id="SSF50692">
    <property type="entry name" value="ADC-like"/>
    <property type="match status" value="1"/>
</dbReference>
<comment type="function">
    <text evidence="1">Catalyzes the pyruvoyl-dependent decarboxylation of aspartate to produce beta-alanine.</text>
</comment>
<comment type="catalytic activity">
    <reaction evidence="1">
        <text>L-aspartate + H(+) = beta-alanine + CO2</text>
        <dbReference type="Rhea" id="RHEA:19497"/>
        <dbReference type="ChEBI" id="CHEBI:15378"/>
        <dbReference type="ChEBI" id="CHEBI:16526"/>
        <dbReference type="ChEBI" id="CHEBI:29991"/>
        <dbReference type="ChEBI" id="CHEBI:57966"/>
        <dbReference type="EC" id="4.1.1.11"/>
    </reaction>
</comment>
<comment type="cofactor">
    <cofactor evidence="1">
        <name>pyruvate</name>
        <dbReference type="ChEBI" id="CHEBI:15361"/>
    </cofactor>
    <text evidence="1">Binds 1 pyruvoyl group covalently per subunit.</text>
</comment>
<comment type="pathway">
    <text evidence="1">Cofactor biosynthesis; (R)-pantothenate biosynthesis; beta-alanine from L-aspartate: step 1/1.</text>
</comment>
<comment type="subunit">
    <text evidence="1">Heterooctamer of four alpha and four beta subunits.</text>
</comment>
<comment type="subcellular location">
    <subcellularLocation>
        <location evidence="1">Cytoplasm</location>
    </subcellularLocation>
</comment>
<comment type="PTM">
    <text evidence="1">Is synthesized initially as an inactive proenzyme, which is activated by self-cleavage at a specific serine bond to produce a beta-subunit with a hydroxyl group at its C-terminus and an alpha-subunit with a pyruvoyl group at its N-terminus.</text>
</comment>
<comment type="similarity">
    <text evidence="1">Belongs to the PanD family.</text>
</comment>
<reference key="1">
    <citation type="journal article" date="2003" name="Nature">
        <title>The genome sequence of Bacillus anthracis Ames and comparison to closely related bacteria.</title>
        <authorList>
            <person name="Read T.D."/>
            <person name="Peterson S.N."/>
            <person name="Tourasse N.J."/>
            <person name="Baillie L.W."/>
            <person name="Paulsen I.T."/>
            <person name="Nelson K.E."/>
            <person name="Tettelin H."/>
            <person name="Fouts D.E."/>
            <person name="Eisen J.A."/>
            <person name="Gill S.R."/>
            <person name="Holtzapple E.K."/>
            <person name="Okstad O.A."/>
            <person name="Helgason E."/>
            <person name="Rilstone J."/>
            <person name="Wu M."/>
            <person name="Kolonay J.F."/>
            <person name="Beanan M.J."/>
            <person name="Dodson R.J."/>
            <person name="Brinkac L.M."/>
            <person name="Gwinn M.L."/>
            <person name="DeBoy R.T."/>
            <person name="Madpu R."/>
            <person name="Daugherty S.C."/>
            <person name="Durkin A.S."/>
            <person name="Haft D.H."/>
            <person name="Nelson W.C."/>
            <person name="Peterson J.D."/>
            <person name="Pop M."/>
            <person name="Khouri H.M."/>
            <person name="Radune D."/>
            <person name="Benton J.L."/>
            <person name="Mahamoud Y."/>
            <person name="Jiang L."/>
            <person name="Hance I.R."/>
            <person name="Weidman J.F."/>
            <person name="Berry K.J."/>
            <person name="Plaut R.D."/>
            <person name="Wolf A.M."/>
            <person name="Watkins K.L."/>
            <person name="Nierman W.C."/>
            <person name="Hazen A."/>
            <person name="Cline R.T."/>
            <person name="Redmond C."/>
            <person name="Thwaite J.E."/>
            <person name="White O."/>
            <person name="Salzberg S.L."/>
            <person name="Thomason B."/>
            <person name="Friedlander A.M."/>
            <person name="Koehler T.M."/>
            <person name="Hanna P.C."/>
            <person name="Kolstoe A.-B."/>
            <person name="Fraser C.M."/>
        </authorList>
    </citation>
    <scope>NUCLEOTIDE SEQUENCE [LARGE SCALE GENOMIC DNA]</scope>
    <source>
        <strain>Ames / isolate Porton</strain>
    </source>
</reference>
<reference key="2">
    <citation type="journal article" date="2009" name="J. Bacteriol.">
        <title>The complete genome sequence of Bacillus anthracis Ames 'Ancestor'.</title>
        <authorList>
            <person name="Ravel J."/>
            <person name="Jiang L."/>
            <person name="Stanley S.T."/>
            <person name="Wilson M.R."/>
            <person name="Decker R.S."/>
            <person name="Read T.D."/>
            <person name="Worsham P."/>
            <person name="Keim P.S."/>
            <person name="Salzberg S.L."/>
            <person name="Fraser-Liggett C.M."/>
            <person name="Rasko D.A."/>
        </authorList>
    </citation>
    <scope>NUCLEOTIDE SEQUENCE [LARGE SCALE GENOMIC DNA]</scope>
    <source>
        <strain>Ames ancestor</strain>
    </source>
</reference>
<reference key="3">
    <citation type="submission" date="2004-01" db="EMBL/GenBank/DDBJ databases">
        <title>Complete genome sequence of Bacillus anthracis Sterne.</title>
        <authorList>
            <person name="Brettin T.S."/>
            <person name="Bruce D."/>
            <person name="Challacombe J.F."/>
            <person name="Gilna P."/>
            <person name="Han C."/>
            <person name="Hill K."/>
            <person name="Hitchcock P."/>
            <person name="Jackson P."/>
            <person name="Keim P."/>
            <person name="Longmire J."/>
            <person name="Lucas S."/>
            <person name="Okinaka R."/>
            <person name="Richardson P."/>
            <person name="Rubin E."/>
            <person name="Tice H."/>
        </authorList>
    </citation>
    <scope>NUCLEOTIDE SEQUENCE [LARGE SCALE GENOMIC DNA]</scope>
    <source>
        <strain>Sterne</strain>
    </source>
</reference>
<name>PAND_BACAN</name>